<proteinExistence type="inferred from homology"/>
<organism>
    <name type="scientific">Sodalis glossinidius (strain morsitans)</name>
    <dbReference type="NCBI Taxonomy" id="343509"/>
    <lineage>
        <taxon>Bacteria</taxon>
        <taxon>Pseudomonadati</taxon>
        <taxon>Pseudomonadota</taxon>
        <taxon>Gammaproteobacteria</taxon>
        <taxon>Enterobacterales</taxon>
        <taxon>Bruguierivoracaceae</taxon>
        <taxon>Sodalis</taxon>
    </lineage>
</organism>
<gene>
    <name evidence="1" type="primary">orn</name>
    <name type="ordered locus">SG0314</name>
</gene>
<accession>Q2NW86</accession>
<sequence length="181" mass="20631">MPVNDNNLIWIDLEMTGLDPERDRIIEIATLVTDANLAILAEGPVLAIYQSDAQLALMNDWNVRTHTASGLVDRVRQSALDEEAAVAQTLAFLADWVPAGKSPICGNSIGQDRRFLFRYMPALEAYFHYRYLDVSTLKELARRWKPEILSGLKKNNTHQALDDIRESVAELAYYREHFIRL</sequence>
<name>ORN_SODGM</name>
<dbReference type="EC" id="3.1.15.-" evidence="1"/>
<dbReference type="EMBL" id="AP008232">
    <property type="protein sequence ID" value="BAE73589.1"/>
    <property type="molecule type" value="Genomic_DNA"/>
</dbReference>
<dbReference type="RefSeq" id="WP_011410177.1">
    <property type="nucleotide sequence ID" value="NC_007712.1"/>
</dbReference>
<dbReference type="SMR" id="Q2NW86"/>
<dbReference type="STRING" id="343509.SG0314"/>
<dbReference type="KEGG" id="sgl:SG0314"/>
<dbReference type="eggNOG" id="COG1949">
    <property type="taxonomic scope" value="Bacteria"/>
</dbReference>
<dbReference type="HOGENOM" id="CLU_064761_2_0_6"/>
<dbReference type="OrthoDB" id="9801329at2"/>
<dbReference type="BioCyc" id="SGLO343509:SGP1_RS02880-MONOMER"/>
<dbReference type="Proteomes" id="UP000001932">
    <property type="component" value="Chromosome"/>
</dbReference>
<dbReference type="GO" id="GO:0005737">
    <property type="term" value="C:cytoplasm"/>
    <property type="evidence" value="ECO:0007669"/>
    <property type="project" value="UniProtKB-SubCell"/>
</dbReference>
<dbReference type="GO" id="GO:0000175">
    <property type="term" value="F:3'-5'-RNA exonuclease activity"/>
    <property type="evidence" value="ECO:0007669"/>
    <property type="project" value="InterPro"/>
</dbReference>
<dbReference type="GO" id="GO:0003676">
    <property type="term" value="F:nucleic acid binding"/>
    <property type="evidence" value="ECO:0007669"/>
    <property type="project" value="InterPro"/>
</dbReference>
<dbReference type="GO" id="GO:0006259">
    <property type="term" value="P:DNA metabolic process"/>
    <property type="evidence" value="ECO:0007669"/>
    <property type="project" value="UniProtKB-ARBA"/>
</dbReference>
<dbReference type="CDD" id="cd06135">
    <property type="entry name" value="Orn"/>
    <property type="match status" value="1"/>
</dbReference>
<dbReference type="FunFam" id="3.30.420.10:FF:000003">
    <property type="entry name" value="Oligoribonuclease"/>
    <property type="match status" value="1"/>
</dbReference>
<dbReference type="Gene3D" id="3.30.420.10">
    <property type="entry name" value="Ribonuclease H-like superfamily/Ribonuclease H"/>
    <property type="match status" value="1"/>
</dbReference>
<dbReference type="HAMAP" id="MF_00045">
    <property type="entry name" value="Oligoribonuclease"/>
    <property type="match status" value="1"/>
</dbReference>
<dbReference type="InterPro" id="IPR013520">
    <property type="entry name" value="Exonuclease_RNaseT/DNA_pol3"/>
</dbReference>
<dbReference type="InterPro" id="IPR022894">
    <property type="entry name" value="Oligoribonuclease"/>
</dbReference>
<dbReference type="InterPro" id="IPR012337">
    <property type="entry name" value="RNaseH-like_sf"/>
</dbReference>
<dbReference type="InterPro" id="IPR036397">
    <property type="entry name" value="RNaseH_sf"/>
</dbReference>
<dbReference type="NCBIfam" id="NF003765">
    <property type="entry name" value="PRK05359.1"/>
    <property type="match status" value="1"/>
</dbReference>
<dbReference type="PANTHER" id="PTHR11046">
    <property type="entry name" value="OLIGORIBONUCLEASE, MITOCHONDRIAL"/>
    <property type="match status" value="1"/>
</dbReference>
<dbReference type="PANTHER" id="PTHR11046:SF0">
    <property type="entry name" value="OLIGORIBONUCLEASE, MITOCHONDRIAL"/>
    <property type="match status" value="1"/>
</dbReference>
<dbReference type="Pfam" id="PF00929">
    <property type="entry name" value="RNase_T"/>
    <property type="match status" value="1"/>
</dbReference>
<dbReference type="SMART" id="SM00479">
    <property type="entry name" value="EXOIII"/>
    <property type="match status" value="1"/>
</dbReference>
<dbReference type="SUPFAM" id="SSF53098">
    <property type="entry name" value="Ribonuclease H-like"/>
    <property type="match status" value="1"/>
</dbReference>
<reference key="1">
    <citation type="journal article" date="2006" name="Genome Res.">
        <title>Massive genome erosion and functional adaptations provide insights into the symbiotic lifestyle of Sodalis glossinidius in the tsetse host.</title>
        <authorList>
            <person name="Toh H."/>
            <person name="Weiss B.L."/>
            <person name="Perkin S.A.H."/>
            <person name="Yamashita A."/>
            <person name="Oshima K."/>
            <person name="Hattori M."/>
            <person name="Aksoy S."/>
        </authorList>
    </citation>
    <scope>NUCLEOTIDE SEQUENCE [LARGE SCALE GENOMIC DNA]</scope>
    <source>
        <strain>morsitans</strain>
    </source>
</reference>
<comment type="function">
    <text evidence="1">3'-to-5' exoribonuclease specific for small oligoribonucleotides.</text>
</comment>
<comment type="subcellular location">
    <subcellularLocation>
        <location evidence="1">Cytoplasm</location>
    </subcellularLocation>
</comment>
<comment type="similarity">
    <text evidence="1">Belongs to the oligoribonuclease family.</text>
</comment>
<feature type="chain" id="PRO_1000004293" description="Oligoribonuclease">
    <location>
        <begin position="1"/>
        <end position="181"/>
    </location>
</feature>
<feature type="domain" description="Exonuclease" evidence="1">
    <location>
        <begin position="8"/>
        <end position="171"/>
    </location>
</feature>
<feature type="active site" evidence="1">
    <location>
        <position position="129"/>
    </location>
</feature>
<keyword id="KW-0963">Cytoplasm</keyword>
<keyword id="KW-0269">Exonuclease</keyword>
<keyword id="KW-0378">Hydrolase</keyword>
<keyword id="KW-0540">Nuclease</keyword>
<evidence type="ECO:0000255" key="1">
    <source>
        <dbReference type="HAMAP-Rule" id="MF_00045"/>
    </source>
</evidence>
<protein>
    <recommendedName>
        <fullName evidence="1">Oligoribonuclease</fullName>
        <ecNumber evidence="1">3.1.15.-</ecNumber>
    </recommendedName>
</protein>